<comment type="function">
    <text evidence="5">Molecular chaperone that may interact with a ClpP-like protease involved in degradation of denatured proteins in the chloroplast.</text>
</comment>
<comment type="subcellular location">
    <subcellularLocation>
        <location>Plastid</location>
        <location>Chloroplast</location>
    </subcellularLocation>
</comment>
<comment type="similarity">
    <text evidence="6">Belongs to the ClpA/ClpB family. ClpC subfamily.</text>
</comment>
<feature type="transit peptide" description="Chloroplast" evidence="2">
    <location>
        <begin position="1"/>
        <end position="72"/>
    </location>
</feature>
<feature type="chain" id="PRO_0000005504" description="Chaperone protein ClpC, chloroplastic">
    <location>
        <begin position="73"/>
        <end position="922"/>
    </location>
</feature>
<feature type="domain" description="Clp R" evidence="4">
    <location>
        <begin position="92"/>
        <end position="234"/>
    </location>
</feature>
<feature type="domain" description="UVR" evidence="3">
    <location>
        <begin position="509"/>
        <end position="544"/>
    </location>
</feature>
<feature type="region of interest" description="Repeat 1" evidence="4">
    <location>
        <begin position="95"/>
        <end position="160"/>
    </location>
</feature>
<feature type="region of interest" description="Repeat 2" evidence="4">
    <location>
        <begin position="170"/>
        <end position="234"/>
    </location>
</feature>
<feature type="region of interest" description="I">
    <location>
        <begin position="255"/>
        <end position="502"/>
    </location>
</feature>
<feature type="region of interest" description="II">
    <location>
        <begin position="569"/>
        <end position="760"/>
    </location>
</feature>
<feature type="binding site" evidence="1">
    <location>
        <begin position="300"/>
        <end position="307"/>
    </location>
    <ligand>
        <name>ATP</name>
        <dbReference type="ChEBI" id="CHEBI:30616"/>
    </ligand>
</feature>
<feature type="binding site" evidence="1">
    <location>
        <begin position="643"/>
        <end position="650"/>
    </location>
    <ligand>
        <name>ATP</name>
        <dbReference type="ChEBI" id="CHEBI:30616"/>
    </ligand>
</feature>
<organism>
    <name type="scientific">Pisum sativum</name>
    <name type="common">Garden pea</name>
    <name type="synonym">Lathyrus oleraceus</name>
    <dbReference type="NCBI Taxonomy" id="3888"/>
    <lineage>
        <taxon>Eukaryota</taxon>
        <taxon>Viridiplantae</taxon>
        <taxon>Streptophyta</taxon>
        <taxon>Embryophyta</taxon>
        <taxon>Tracheophyta</taxon>
        <taxon>Spermatophyta</taxon>
        <taxon>Magnoliopsida</taxon>
        <taxon>eudicotyledons</taxon>
        <taxon>Gunneridae</taxon>
        <taxon>Pentapetalae</taxon>
        <taxon>rosids</taxon>
        <taxon>fabids</taxon>
        <taxon>Fabales</taxon>
        <taxon>Fabaceae</taxon>
        <taxon>Papilionoideae</taxon>
        <taxon>50 kb inversion clade</taxon>
        <taxon>NPAAA clade</taxon>
        <taxon>Hologalegina</taxon>
        <taxon>IRL clade</taxon>
        <taxon>Fabeae</taxon>
        <taxon>Pisum</taxon>
    </lineage>
</organism>
<proteinExistence type="evidence at transcript level"/>
<evidence type="ECO:0000250" key="1"/>
<evidence type="ECO:0000255" key="2"/>
<evidence type="ECO:0000255" key="3">
    <source>
        <dbReference type="PROSITE-ProRule" id="PRU00217"/>
    </source>
</evidence>
<evidence type="ECO:0000255" key="4">
    <source>
        <dbReference type="PROSITE-ProRule" id="PRU01251"/>
    </source>
</evidence>
<evidence type="ECO:0000269" key="5">
    <source>
    </source>
</evidence>
<evidence type="ECO:0000305" key="6"/>
<protein>
    <recommendedName>
        <fullName>Chaperone protein ClpC, chloroplastic</fullName>
    </recommendedName>
    <alternativeName>
        <fullName>ATP-dependent Clp protease ATP-binding subunit ClpC homolog</fullName>
    </alternativeName>
    <alternativeName>
        <fullName>Casein lytic proteinase C</fullName>
    </alternativeName>
</protein>
<sequence>MARVLAQSLSVPGLVAGHKDSQHKGSGKSKRSVKTMCALRTSGLRMSGFSGLRTFNHLNTMMRPGLDFHSKVSKAVSSRRARAKRFIPRAMFERFTEKAIKVIMLAQEEARRLGHNFVGTEQILLGLIGEGTGIAAKVLKSMGINLKDARVEVEKIIGRGSGFVAVEIPFTPRAKRVLELSQEEARQLGHNYIGSEHLLLGLLREGEGVAARVLENLGADPTNIRTQVIRMVGESADSVTATVGSGSSNNKTPTLEEYGTNLTKLAEEGKLDPVVGRQPQIERVTQILGRRTKNNPCLIGEPGVGKTAIAEGLAQRIANGDVPETIEGKKVITLDMGLLVAGTKYRGEFEERLKKLMEEIKQSDDIILFIDEVHTLIGAGAAEGAIDAANILKPALARGELQCIGATTLDEYRKHIEKDPDLERRFQPVKVPEPTVDETIQILKGLRERYEIHHKLRYTDEALIAAAQLSYQYISDRFLPDKAIDLVDEAGSRVRLQHAQLPEEAKELDKEVRKIVKEKEEYVRNQDFEKAGELRDKEMDLKAQISALIEKGKEMSKAETETADEGPIVTEVDIQHIVSSWTGIPVDKVSADESDRLLKMEDTLHKRIIGQDEAVQAISRAIRRARVGLKNPNRPIASFIFSGPTGVGKSELAKALAAYYFGSEEAMIRLDMSEFMERHTVSKLIGSPPGYVGYTEGGQLTEAVRRRPYTVVLFDEIEKAHPDVFNMMLQILEDGRLTDSKGRTVDFKNTLLIMTSNVGSSVIEKGGRRIGFDLDYDEKDSSYNRIKSLVTEELKQYFRPEFLNRLDEMIVFRQLTKLEVKEIADIMLKEVFQRLKTKEIELQVTERFRDRVVDEGYNPSYGARPLRRAIMRLLEDSMAEKMLAREIKEGDSVIVDVDSDGKVIVLNGSSGTPESLPEALSI</sequence>
<keyword id="KW-0067">ATP-binding</keyword>
<keyword id="KW-0143">Chaperone</keyword>
<keyword id="KW-0150">Chloroplast</keyword>
<keyword id="KW-0547">Nucleotide-binding</keyword>
<keyword id="KW-0934">Plastid</keyword>
<keyword id="KW-0677">Repeat</keyword>
<keyword id="KW-0809">Transit peptide</keyword>
<reference key="1">
    <citation type="journal article" date="1993" name="Plant Mol. Biol.">
        <title>Characterization of a cDNA clone encoding a chloroplast-targeted Clp homologue.</title>
        <authorList>
            <person name="Moore T."/>
            <person name="Keegstra K."/>
        </authorList>
    </citation>
    <scope>NUCLEOTIDE SEQUENCE [MRNA]</scope>
    <source>
        <strain>cv. Little Marvel</strain>
    </source>
</reference>
<reference key="2">
    <citation type="journal article" date="1992" name="J. Bacteriol.">
        <title>The Clp proteins: proteolysis regulators or molecular chaperones?</title>
        <authorList>
            <person name="Squires C."/>
            <person name="Squires C.L."/>
        </authorList>
    </citation>
    <scope>FUNCTION</scope>
    <scope>CLASSIFICATION</scope>
</reference>
<name>CLPC_PEA</name>
<accession>P35100</accession>
<dbReference type="EMBL" id="L09547">
    <property type="protein sequence ID" value="AAA33680.1"/>
    <property type="molecule type" value="mRNA"/>
</dbReference>
<dbReference type="PIR" id="S31164">
    <property type="entry name" value="S31164"/>
</dbReference>
<dbReference type="SMR" id="P35100"/>
<dbReference type="DIP" id="DIP-729N"/>
<dbReference type="IntAct" id="P35100">
    <property type="interactions" value="2"/>
</dbReference>
<dbReference type="MEROPS" id="X20.001"/>
<dbReference type="GO" id="GO:0009507">
    <property type="term" value="C:chloroplast"/>
    <property type="evidence" value="ECO:0007669"/>
    <property type="project" value="UniProtKB-SubCell"/>
</dbReference>
<dbReference type="GO" id="GO:0005524">
    <property type="term" value="F:ATP binding"/>
    <property type="evidence" value="ECO:0007669"/>
    <property type="project" value="UniProtKB-KW"/>
</dbReference>
<dbReference type="GO" id="GO:0016887">
    <property type="term" value="F:ATP hydrolysis activity"/>
    <property type="evidence" value="ECO:0007669"/>
    <property type="project" value="InterPro"/>
</dbReference>
<dbReference type="GO" id="GO:0034605">
    <property type="term" value="P:cellular response to heat"/>
    <property type="evidence" value="ECO:0007669"/>
    <property type="project" value="TreeGrafter"/>
</dbReference>
<dbReference type="CDD" id="cd00009">
    <property type="entry name" value="AAA"/>
    <property type="match status" value="1"/>
</dbReference>
<dbReference type="CDD" id="cd19499">
    <property type="entry name" value="RecA-like_ClpB_Hsp104-like"/>
    <property type="match status" value="1"/>
</dbReference>
<dbReference type="FunFam" id="1.10.8.60:FF:000017">
    <property type="entry name" value="ATP-dependent chaperone ClpB"/>
    <property type="match status" value="1"/>
</dbReference>
<dbReference type="FunFam" id="1.10.8.60:FF:000011">
    <property type="entry name" value="ATP-dependent Clp protease ATP-binding subunit"/>
    <property type="match status" value="1"/>
</dbReference>
<dbReference type="FunFam" id="1.10.1780.10:FF:000004">
    <property type="entry name" value="ATP-dependent Clp protease ATP-binding subunit ClpC"/>
    <property type="match status" value="1"/>
</dbReference>
<dbReference type="FunFam" id="3.40.50.300:FF:000025">
    <property type="entry name" value="ATP-dependent Clp protease subunit"/>
    <property type="match status" value="1"/>
</dbReference>
<dbReference type="FunFam" id="3.40.50.300:FF:000010">
    <property type="entry name" value="Chaperone clpB 1, putative"/>
    <property type="match status" value="1"/>
</dbReference>
<dbReference type="Gene3D" id="1.10.8.60">
    <property type="match status" value="2"/>
</dbReference>
<dbReference type="Gene3D" id="1.10.1780.10">
    <property type="entry name" value="Clp, N-terminal domain"/>
    <property type="match status" value="1"/>
</dbReference>
<dbReference type="Gene3D" id="3.40.50.300">
    <property type="entry name" value="P-loop containing nucleotide triphosphate hydrolases"/>
    <property type="match status" value="2"/>
</dbReference>
<dbReference type="Gene3D" id="4.10.860.10">
    <property type="entry name" value="UVR domain"/>
    <property type="match status" value="1"/>
</dbReference>
<dbReference type="InterPro" id="IPR003593">
    <property type="entry name" value="AAA+_ATPase"/>
</dbReference>
<dbReference type="InterPro" id="IPR003959">
    <property type="entry name" value="ATPase_AAA_core"/>
</dbReference>
<dbReference type="InterPro" id="IPR019489">
    <property type="entry name" value="Clp_ATPase_C"/>
</dbReference>
<dbReference type="InterPro" id="IPR036628">
    <property type="entry name" value="Clp_N_dom_sf"/>
</dbReference>
<dbReference type="InterPro" id="IPR004176">
    <property type="entry name" value="Clp_R_dom"/>
</dbReference>
<dbReference type="InterPro" id="IPR001270">
    <property type="entry name" value="ClpA/B"/>
</dbReference>
<dbReference type="InterPro" id="IPR018368">
    <property type="entry name" value="ClpA/B_CS1"/>
</dbReference>
<dbReference type="InterPro" id="IPR028299">
    <property type="entry name" value="ClpA/B_CS2"/>
</dbReference>
<dbReference type="InterPro" id="IPR041546">
    <property type="entry name" value="ClpA/ClpB_AAA_lid"/>
</dbReference>
<dbReference type="InterPro" id="IPR050130">
    <property type="entry name" value="ClpA_ClpB"/>
</dbReference>
<dbReference type="InterPro" id="IPR027417">
    <property type="entry name" value="P-loop_NTPase"/>
</dbReference>
<dbReference type="InterPro" id="IPR001943">
    <property type="entry name" value="UVR_dom"/>
</dbReference>
<dbReference type="PANTHER" id="PTHR11638">
    <property type="entry name" value="ATP-DEPENDENT CLP PROTEASE"/>
    <property type="match status" value="1"/>
</dbReference>
<dbReference type="PANTHER" id="PTHR11638:SF155">
    <property type="entry name" value="CHAPERONE PROTEIN CLPC1, CHLOROPLASTIC-LIKE"/>
    <property type="match status" value="1"/>
</dbReference>
<dbReference type="Pfam" id="PF00004">
    <property type="entry name" value="AAA"/>
    <property type="match status" value="1"/>
</dbReference>
<dbReference type="Pfam" id="PF07724">
    <property type="entry name" value="AAA_2"/>
    <property type="match status" value="1"/>
</dbReference>
<dbReference type="Pfam" id="PF17871">
    <property type="entry name" value="AAA_lid_9"/>
    <property type="match status" value="1"/>
</dbReference>
<dbReference type="Pfam" id="PF02861">
    <property type="entry name" value="Clp_N"/>
    <property type="match status" value="2"/>
</dbReference>
<dbReference type="Pfam" id="PF10431">
    <property type="entry name" value="ClpB_D2-small"/>
    <property type="match status" value="1"/>
</dbReference>
<dbReference type="PRINTS" id="PR00300">
    <property type="entry name" value="CLPPROTEASEA"/>
</dbReference>
<dbReference type="SMART" id="SM00382">
    <property type="entry name" value="AAA"/>
    <property type="match status" value="2"/>
</dbReference>
<dbReference type="SMART" id="SM01086">
    <property type="entry name" value="ClpB_D2-small"/>
    <property type="match status" value="1"/>
</dbReference>
<dbReference type="SUPFAM" id="SSF81923">
    <property type="entry name" value="Double Clp-N motif"/>
    <property type="match status" value="1"/>
</dbReference>
<dbReference type="SUPFAM" id="SSF52540">
    <property type="entry name" value="P-loop containing nucleoside triphosphate hydrolases"/>
    <property type="match status" value="2"/>
</dbReference>
<dbReference type="PROSITE" id="PS51903">
    <property type="entry name" value="CLP_R"/>
    <property type="match status" value="1"/>
</dbReference>
<dbReference type="PROSITE" id="PS00870">
    <property type="entry name" value="CLPAB_1"/>
    <property type="match status" value="1"/>
</dbReference>
<dbReference type="PROSITE" id="PS00871">
    <property type="entry name" value="CLPAB_2"/>
    <property type="match status" value="1"/>
</dbReference>
<dbReference type="PROSITE" id="PS50151">
    <property type="entry name" value="UVR"/>
    <property type="match status" value="1"/>
</dbReference>